<comment type="similarity">
    <text evidence="2">Belongs to the hssA/B family.</text>
</comment>
<accession>Q86KT9</accession>
<accession>Q54Z80</accession>
<feature type="chain" id="PRO_0000330399" description="HssA/B-like protein 30">
    <location>
        <begin position="1"/>
        <end position="78"/>
    </location>
</feature>
<feature type="region of interest" description="Disordered" evidence="1">
    <location>
        <begin position="1"/>
        <end position="32"/>
    </location>
</feature>
<name>HSL30_DICDI</name>
<dbReference type="EMBL" id="AAFI02000022">
    <property type="protein sequence ID" value="EAL68544.1"/>
    <property type="molecule type" value="Genomic_DNA"/>
</dbReference>
<dbReference type="RefSeq" id="XP_642473.1">
    <property type="nucleotide sequence ID" value="XM_637381.1"/>
</dbReference>
<dbReference type="FunCoup" id="Q86KT9">
    <property type="interactions" value="243"/>
</dbReference>
<dbReference type="PaxDb" id="44689-DDB0234119"/>
<dbReference type="EnsemblProtists" id="EAL68544">
    <property type="protein sequence ID" value="EAL68544"/>
    <property type="gene ID" value="DDB_G0277741"/>
</dbReference>
<dbReference type="GeneID" id="8621184"/>
<dbReference type="KEGG" id="ddi:DDB_G0277741"/>
<dbReference type="dictyBase" id="DDB_G0277741"/>
<dbReference type="HOGENOM" id="CLU_181850_0_0_1"/>
<dbReference type="InParanoid" id="Q86KT9"/>
<dbReference type="PRO" id="PR:Q86KT9"/>
<dbReference type="Proteomes" id="UP000002195">
    <property type="component" value="Chromosome 2"/>
</dbReference>
<dbReference type="GO" id="GO:0030587">
    <property type="term" value="P:sorocarp development"/>
    <property type="evidence" value="ECO:0000318"/>
    <property type="project" value="GO_Central"/>
</dbReference>
<dbReference type="InterPro" id="IPR050533">
    <property type="entry name" value="HssA/B-like_chaperone"/>
</dbReference>
<dbReference type="InterPro" id="IPR008455">
    <property type="entry name" value="HssA/B-related"/>
</dbReference>
<dbReference type="PANTHER" id="PTHR31059">
    <property type="entry name" value="HSSA/B-LIKE PROTEIN 1-RELATED-RELATED"/>
    <property type="match status" value="1"/>
</dbReference>
<dbReference type="PANTHER" id="PTHR31059:SF5">
    <property type="entry name" value="HSSA_B-LIKE PROTEIN 1-RELATED"/>
    <property type="match status" value="1"/>
</dbReference>
<dbReference type="Pfam" id="PF05710">
    <property type="entry name" value="Coiled"/>
    <property type="match status" value="1"/>
</dbReference>
<evidence type="ECO:0000256" key="1">
    <source>
        <dbReference type="SAM" id="MobiDB-lite"/>
    </source>
</evidence>
<evidence type="ECO:0000305" key="2"/>
<organism>
    <name type="scientific">Dictyostelium discoideum</name>
    <name type="common">Social amoeba</name>
    <dbReference type="NCBI Taxonomy" id="44689"/>
    <lineage>
        <taxon>Eukaryota</taxon>
        <taxon>Amoebozoa</taxon>
        <taxon>Evosea</taxon>
        <taxon>Eumycetozoa</taxon>
        <taxon>Dictyostelia</taxon>
        <taxon>Dictyosteliales</taxon>
        <taxon>Dictyosteliaceae</taxon>
        <taxon>Dictyostelium</taxon>
    </lineage>
</organism>
<keyword id="KW-1185">Reference proteome</keyword>
<gene>
    <name type="primary">hssl30</name>
    <name type="ORF">DDB_G0277741</name>
</gene>
<sequence length="78" mass="7497">MTLFSSITSISKTNTSSKSSVNSLSGSSLSMGSNSVACGGCDKPAAGAAILANIDIKAKVDLSLSAAAAASAKCGACH</sequence>
<protein>
    <recommendedName>
        <fullName>HssA/B-like protein 30</fullName>
    </recommendedName>
</protein>
<reference key="1">
    <citation type="journal article" date="2002" name="Nature">
        <title>Sequence and analysis of chromosome 2 of Dictyostelium discoideum.</title>
        <authorList>
            <person name="Gloeckner G."/>
            <person name="Eichinger L."/>
            <person name="Szafranski K."/>
            <person name="Pachebat J.A."/>
            <person name="Bankier A.T."/>
            <person name="Dear P.H."/>
            <person name="Lehmann R."/>
            <person name="Baumgart C."/>
            <person name="Parra G."/>
            <person name="Abril J.F."/>
            <person name="Guigo R."/>
            <person name="Kumpf K."/>
            <person name="Tunggal B."/>
            <person name="Cox E.C."/>
            <person name="Quail M.A."/>
            <person name="Platzer M."/>
            <person name="Rosenthal A."/>
            <person name="Noegel A.A."/>
        </authorList>
    </citation>
    <scope>NUCLEOTIDE SEQUENCE [LARGE SCALE GENOMIC DNA]</scope>
    <source>
        <strain>AX4</strain>
    </source>
</reference>
<reference key="2">
    <citation type="journal article" date="2005" name="Nature">
        <title>The genome of the social amoeba Dictyostelium discoideum.</title>
        <authorList>
            <person name="Eichinger L."/>
            <person name="Pachebat J.A."/>
            <person name="Gloeckner G."/>
            <person name="Rajandream M.A."/>
            <person name="Sucgang R."/>
            <person name="Berriman M."/>
            <person name="Song J."/>
            <person name="Olsen R."/>
            <person name="Szafranski K."/>
            <person name="Xu Q."/>
            <person name="Tunggal B."/>
            <person name="Kummerfeld S."/>
            <person name="Madera M."/>
            <person name="Konfortov B.A."/>
            <person name="Rivero F."/>
            <person name="Bankier A.T."/>
            <person name="Lehmann R."/>
            <person name="Hamlin N."/>
            <person name="Davies R."/>
            <person name="Gaudet P."/>
            <person name="Fey P."/>
            <person name="Pilcher K."/>
            <person name="Chen G."/>
            <person name="Saunders D."/>
            <person name="Sodergren E.J."/>
            <person name="Davis P."/>
            <person name="Kerhornou A."/>
            <person name="Nie X."/>
            <person name="Hall N."/>
            <person name="Anjard C."/>
            <person name="Hemphill L."/>
            <person name="Bason N."/>
            <person name="Farbrother P."/>
            <person name="Desany B."/>
            <person name="Just E."/>
            <person name="Morio T."/>
            <person name="Rost R."/>
            <person name="Churcher C.M."/>
            <person name="Cooper J."/>
            <person name="Haydock S."/>
            <person name="van Driessche N."/>
            <person name="Cronin A."/>
            <person name="Goodhead I."/>
            <person name="Muzny D.M."/>
            <person name="Mourier T."/>
            <person name="Pain A."/>
            <person name="Lu M."/>
            <person name="Harper D."/>
            <person name="Lindsay R."/>
            <person name="Hauser H."/>
            <person name="James K.D."/>
            <person name="Quiles M."/>
            <person name="Madan Babu M."/>
            <person name="Saito T."/>
            <person name="Buchrieser C."/>
            <person name="Wardroper A."/>
            <person name="Felder M."/>
            <person name="Thangavelu M."/>
            <person name="Johnson D."/>
            <person name="Knights A."/>
            <person name="Loulseged H."/>
            <person name="Mungall K.L."/>
            <person name="Oliver K."/>
            <person name="Price C."/>
            <person name="Quail M.A."/>
            <person name="Urushihara H."/>
            <person name="Hernandez J."/>
            <person name="Rabbinowitsch E."/>
            <person name="Steffen D."/>
            <person name="Sanders M."/>
            <person name="Ma J."/>
            <person name="Kohara Y."/>
            <person name="Sharp S."/>
            <person name="Simmonds M.N."/>
            <person name="Spiegler S."/>
            <person name="Tivey A."/>
            <person name="Sugano S."/>
            <person name="White B."/>
            <person name="Walker D."/>
            <person name="Woodward J.R."/>
            <person name="Winckler T."/>
            <person name="Tanaka Y."/>
            <person name="Shaulsky G."/>
            <person name="Schleicher M."/>
            <person name="Weinstock G.M."/>
            <person name="Rosenthal A."/>
            <person name="Cox E.C."/>
            <person name="Chisholm R.L."/>
            <person name="Gibbs R.A."/>
            <person name="Loomis W.F."/>
            <person name="Platzer M."/>
            <person name="Kay R.R."/>
            <person name="Williams J.G."/>
            <person name="Dear P.H."/>
            <person name="Noegel A.A."/>
            <person name="Barrell B.G."/>
            <person name="Kuspa A."/>
        </authorList>
    </citation>
    <scope>NUCLEOTIDE SEQUENCE [LARGE SCALE GENOMIC DNA]</scope>
    <source>
        <strain>AX4</strain>
    </source>
</reference>
<proteinExistence type="inferred from homology"/>